<keyword id="KW-0903">Direct protein sequencing</keyword>
<keyword id="KW-0249">Electron transport</keyword>
<keyword id="KW-0472">Membrane</keyword>
<keyword id="KW-0496">Mitochondrion</keyword>
<keyword id="KW-0999">Mitochondrion inner membrane</keyword>
<keyword id="KW-0520">NAD</keyword>
<keyword id="KW-0560">Oxidoreductase</keyword>
<keyword id="KW-1185">Reference proteome</keyword>
<keyword id="KW-0679">Respiratory chain</keyword>
<keyword id="KW-0691">RNA editing</keyword>
<keyword id="KW-1278">Translocase</keyword>
<keyword id="KW-0813">Transport</keyword>
<keyword id="KW-0830">Ubiquinone</keyword>
<gene>
    <name type="primary">NAD9</name>
</gene>
<protein>
    <recommendedName>
        <fullName>NADH dehydrogenase [ubiquinone] iron-sulfur protein 3</fullName>
        <ecNumber>7.1.1.2</ecNumber>
    </recommendedName>
    <alternativeName>
        <fullName>Complex I-27kD</fullName>
        <shortName>CI-27kD</shortName>
    </alternativeName>
    <alternativeName>
        <fullName>NADH dehydrogenase subunit 9</fullName>
    </alternativeName>
    <alternativeName>
        <fullName>NADH-ubiquinone oxidoreductase 27 kDa subunit</fullName>
    </alternativeName>
</protein>
<accession>P80261</accession>
<sequence length="190" mass="22883">MDNQFIFKYSWETLPKKWVKKMERSEHGNRFDTNTDYLFQLLCFMKLHTYTRVQVLIDICGVDYPSRKQRFEVVYNLLSIRYNSRIRVQTSADEVTRISSVVSLFPSAGWWEREVWDMFGVFSINHPDLRRILTDYGFEGHPLRKDFPLSGYVEVRYDDPEKRVVSEPIEMTQEFRYFDFASPWEQRSDG</sequence>
<proteinExistence type="evidence at protein level"/>
<comment type="function">
    <text evidence="1">Core subunit of the mitochondrial membrane respiratory chain NADH dehydrogenase (Complex I) that is believed to belong to the minimal assembly required for catalysis. Complex I functions in the transfer of electrons from NADH to the respiratory chain. The immediate electron acceptor for the enzyme is believed to be ubiquinone (By similarity).</text>
</comment>
<comment type="catalytic activity">
    <reaction>
        <text>a ubiquinone + NADH + 5 H(+)(in) = a ubiquinol + NAD(+) + 4 H(+)(out)</text>
        <dbReference type="Rhea" id="RHEA:29091"/>
        <dbReference type="Rhea" id="RHEA-COMP:9565"/>
        <dbReference type="Rhea" id="RHEA-COMP:9566"/>
        <dbReference type="ChEBI" id="CHEBI:15378"/>
        <dbReference type="ChEBI" id="CHEBI:16389"/>
        <dbReference type="ChEBI" id="CHEBI:17976"/>
        <dbReference type="ChEBI" id="CHEBI:57540"/>
        <dbReference type="ChEBI" id="CHEBI:57945"/>
        <dbReference type="EC" id="7.1.1.2"/>
    </reaction>
</comment>
<comment type="subunit">
    <text evidence="1">Complex I is composed of about 45 different subunits. This is a component of the iron-sulfur (IP) fragment of the enzyme (By similarity).</text>
</comment>
<comment type="subcellular location">
    <subcellularLocation>
        <location>Mitochondrion inner membrane</location>
        <topology>Peripheral membrane protein</topology>
        <orientation>Matrix side</orientation>
    </subcellularLocation>
</comment>
<comment type="RNA editing">
    <location>
        <position position="31" evidence="2"/>
    </location>
    <location>
        <position position="56" evidence="2"/>
    </location>
    <location>
        <position position="100" evidence="2"/>
    </location>
    <location>
        <position position="110" evidence="2"/>
    </location>
    <location>
        <position position="122" evidence="2"/>
    </location>
    <location>
        <position position="133" evidence="2"/>
    </location>
    <location>
        <position position="147" evidence="2"/>
    </location>
</comment>
<comment type="similarity">
    <text evidence="3">Belongs to the complex I 30 kDa subunit family.</text>
</comment>
<evidence type="ECO:0000250" key="1"/>
<evidence type="ECO:0000269" key="2">
    <source>
    </source>
</evidence>
<evidence type="ECO:0000305" key="3"/>
<name>NDUS3_SOLTU</name>
<geneLocation type="mitochondrion"/>
<reference key="1">
    <citation type="journal article" date="1994" name="Nucleic Acids Res.">
        <title>Translation of nad9 mRNAs in mitochondria from Solanum tuberosum is restricted to completely edited transcripts.</title>
        <authorList>
            <person name="Grohmann L."/>
            <person name="Thieck O."/>
            <person name="Herz U."/>
            <person name="Schroeder W."/>
            <person name="Brennicke A."/>
        </authorList>
    </citation>
    <scope>NUCLEOTIDE SEQUENCE [GENOMIC DNA]</scope>
    <scope>PARTIAL PROTEIN SEQUENCE</scope>
    <scope>RNA EDITING</scope>
    <source>
        <tissue>Tuber</tissue>
    </source>
</reference>
<reference key="2">
    <citation type="journal article" date="1994" name="J. Biol. Chem.">
        <title>Purification of the NADH:ubiquinone oxidoreductase (complex I) of the respiratory chain from the inner mitochondrial membrane of Solanum tuberosum.</title>
        <authorList>
            <person name="Herz U."/>
            <person name="Schroeder W."/>
            <person name="Liddell A."/>
            <person name="Leaver C.J."/>
            <person name="Brennicke A."/>
            <person name="Grohmann L."/>
        </authorList>
    </citation>
    <scope>PROTEIN SEQUENCE OF 1-17</scope>
    <source>
        <strain>cv. Bintje</strain>
        <tissue>Tuber</tissue>
    </source>
</reference>
<organism>
    <name type="scientific">Solanum tuberosum</name>
    <name type="common">Potato</name>
    <dbReference type="NCBI Taxonomy" id="4113"/>
    <lineage>
        <taxon>Eukaryota</taxon>
        <taxon>Viridiplantae</taxon>
        <taxon>Streptophyta</taxon>
        <taxon>Embryophyta</taxon>
        <taxon>Tracheophyta</taxon>
        <taxon>Spermatophyta</taxon>
        <taxon>Magnoliopsida</taxon>
        <taxon>eudicotyledons</taxon>
        <taxon>Gunneridae</taxon>
        <taxon>Pentapetalae</taxon>
        <taxon>asterids</taxon>
        <taxon>lamiids</taxon>
        <taxon>Solanales</taxon>
        <taxon>Solanaceae</taxon>
        <taxon>Solanoideae</taxon>
        <taxon>Solaneae</taxon>
        <taxon>Solanum</taxon>
    </lineage>
</organism>
<dbReference type="EC" id="7.1.1.2"/>
<dbReference type="EMBL" id="X79774">
    <property type="protein sequence ID" value="CAA56168.1"/>
    <property type="status" value="ALT_SEQ"/>
    <property type="molecule type" value="Genomic_DNA"/>
</dbReference>
<dbReference type="PIR" id="S48062">
    <property type="entry name" value="S48062"/>
</dbReference>
<dbReference type="SMR" id="P80261"/>
<dbReference type="FunCoup" id="P80261">
    <property type="interactions" value="1760"/>
</dbReference>
<dbReference type="STRING" id="4113.P80261"/>
<dbReference type="InParanoid" id="P80261"/>
<dbReference type="Proteomes" id="UP000011115">
    <property type="component" value="Unassembled WGS sequence"/>
</dbReference>
<dbReference type="GO" id="GO:0005743">
    <property type="term" value="C:mitochondrial inner membrane"/>
    <property type="evidence" value="ECO:0007669"/>
    <property type="project" value="UniProtKB-SubCell"/>
</dbReference>
<dbReference type="GO" id="GO:0045271">
    <property type="term" value="C:respiratory chain complex I"/>
    <property type="evidence" value="ECO:0000318"/>
    <property type="project" value="GO_Central"/>
</dbReference>
<dbReference type="GO" id="GO:0008137">
    <property type="term" value="F:NADH dehydrogenase (ubiquinone) activity"/>
    <property type="evidence" value="ECO:0007669"/>
    <property type="project" value="UniProtKB-EC"/>
</dbReference>
<dbReference type="FunFam" id="3.30.460.80:FF:000005">
    <property type="entry name" value="NADH dehydrogenase subunit 9"/>
    <property type="match status" value="1"/>
</dbReference>
<dbReference type="Gene3D" id="3.30.460.80">
    <property type="entry name" value="NADH:ubiquinone oxidoreductase, 30kDa subunit"/>
    <property type="match status" value="1"/>
</dbReference>
<dbReference type="HAMAP" id="MF_01357">
    <property type="entry name" value="NDH1_NuoC"/>
    <property type="match status" value="1"/>
</dbReference>
<dbReference type="InterPro" id="IPR010218">
    <property type="entry name" value="NADH_DH_suC"/>
</dbReference>
<dbReference type="InterPro" id="IPR037232">
    <property type="entry name" value="NADH_quin_OxRdtase_su_C/D-like"/>
</dbReference>
<dbReference type="InterPro" id="IPR001268">
    <property type="entry name" value="NADH_UbQ_OxRdtase_30kDa_su"/>
</dbReference>
<dbReference type="InterPro" id="IPR020396">
    <property type="entry name" value="NADH_UbQ_OxRdtase_CS"/>
</dbReference>
<dbReference type="NCBIfam" id="TIGR01961">
    <property type="entry name" value="NuoC_fam"/>
    <property type="match status" value="1"/>
</dbReference>
<dbReference type="NCBIfam" id="NF004733">
    <property type="entry name" value="PRK06074.1-5"/>
    <property type="match status" value="1"/>
</dbReference>
<dbReference type="PANTHER" id="PTHR10884:SF14">
    <property type="entry name" value="NADH DEHYDROGENASE [UBIQUINONE] IRON-SULFUR PROTEIN 3, MITOCHONDRIAL"/>
    <property type="match status" value="1"/>
</dbReference>
<dbReference type="PANTHER" id="PTHR10884">
    <property type="entry name" value="NADH DEHYDROGENASE UBIQUINONE IRON-SULFUR PROTEIN 3"/>
    <property type="match status" value="1"/>
</dbReference>
<dbReference type="Pfam" id="PF00329">
    <property type="entry name" value="Complex1_30kDa"/>
    <property type="match status" value="1"/>
</dbReference>
<dbReference type="SUPFAM" id="SSF143243">
    <property type="entry name" value="Nqo5-like"/>
    <property type="match status" value="1"/>
</dbReference>
<dbReference type="PROSITE" id="PS00542">
    <property type="entry name" value="COMPLEX1_30K"/>
    <property type="match status" value="1"/>
</dbReference>
<feature type="chain" id="PRO_0000118643" description="NADH dehydrogenase [ubiquinone] iron-sulfur protein 3">
    <location>
        <begin position="1"/>
        <end position="190"/>
    </location>
</feature>